<sequence>MSEQERIQECLRKEIRSLLISTKDGLSPQELEKEYLLMVGNHLPLRILGYRSTMELVLDMPDVVRVCPGAGGTVILKAIPDESTKGIASLVAKQRSSHKLRNSMHKGRPSIYSGPRSHRRVPYRGRVAPILPAVVKSELKDLLALSPVLLSDFEKAFAKRFGRSFQYMQYGFLSMFEVLNAASDVISVEQTRAGSLLMLKKSVTEEKPRGCPAGKIFTQPFRMKQGSYSTGFPVAKPCFSQPTSNMEPPKQIMSMEKTSKLNVVETSRLNHTEKLNQLENTFKSVIAQIGPGGTISSELKHKIKFVVSKFPEGLFISKLLGEYEVIFKEQLSPKKLGFLNVTELVGALSDILHVEFRKGHQDLLVFDADKKPLPPVQSDKKIEAKACVSSPPRNSLSTAAVKETVWNCPSKKQKEPQQKICKKPNLVVKPLQLQVETNKSELNLAMANHDIPPDAVPNKKLCRLPPLDTSSLIGVFVEYIISPSQFYIRIYSRDSSELLEDMMIEMRRCYSNQLVSDRYVMPECFIQPGHLCCVRISEDKWWYRVIIHRVLEKQEVEVFYPDFGNIGIVQKSSLRFLKCCYTKLPAQAIPCSLAWVRPVEEHWTSKAILQFQKLCGLKPLVGVVDEYVDGILNIFLCDTSSNEDVYFHHVLRTEGHAIVCRENISSKGFSELNPLALYTTSSGGPEDIVLTELGYPSQQHYFNEDRKISPQSKESELRILDEIPTGMPCLESVTIGDDIWDENWLPLQAKMGKGGDAASHLFTASLGGKNQYSSCKEMPQKDWCFSTPKDTWDDSWQPSGLVNGTKVEVHKPEVLGAQEKNTGTNRTQKQLDINGSSDSSTLPKLEEFCTSLTQSEQSADGSQSEPNNSQTQPKQIQLSTAAPCSTTAVDDSAEKPSGSVESSPEILKNEDFSSSRAITLYKDKRQESVDQLSLILSYECQISQKLYIPRSTATAALGAAARLATSRSLLHWYPSVKRMEA</sequence>
<comment type="function">
    <text evidence="1">Required during spermiogenesis to participate in the repression transposable elements and prevent their mobilization, which is essential for the germline integrity. Probably acts via the piRNA metabolic process, which mediates the repression of transposable elements during meiosis by forming complexes composed of piRNAs and Piwi proteins and govern the methylation and subsequent repression of transposons. Required for chromatoid body (CB) assembly (By similarity).</text>
</comment>
<comment type="subcellular location">
    <subcellularLocation>
        <location evidence="1">Cytoplasm</location>
    </subcellularLocation>
    <text evidence="1">Localizes to chromatoid body (CB) and pi-body (also called intermitochondrial cementin), 2 cytoplasmic ribonucleoprotein granules involved in RNA processing for spermatogenesis.</text>
</comment>
<comment type="alternative products">
    <event type="alternative splicing"/>
    <isoform>
        <id>Q8NAT2-3</id>
        <name>3</name>
        <sequence type="displayed"/>
    </isoform>
    <isoform>
        <id>Q8NAT2-1</id>
        <name>1</name>
        <sequence type="described" ref="VSP_023968"/>
    </isoform>
</comment>
<comment type="similarity">
    <text evidence="8">Belongs to the TDRD5 family.</text>
</comment>
<comment type="sequence caution" evidence="8">
    <conflict type="frameshift">
        <sequence resource="EMBL-CDS" id="BAC03815"/>
    </conflict>
</comment>
<evidence type="ECO:0000250" key="1"/>
<evidence type="ECO:0000250" key="2">
    <source>
        <dbReference type="UniProtKB" id="Q5VCS6"/>
    </source>
</evidence>
<evidence type="ECO:0000255" key="3">
    <source>
        <dbReference type="PROSITE-ProRule" id="PRU00211"/>
    </source>
</evidence>
<evidence type="ECO:0000255" key="4">
    <source>
        <dbReference type="PROSITE-ProRule" id="PRU00975"/>
    </source>
</evidence>
<evidence type="ECO:0000256" key="5">
    <source>
        <dbReference type="SAM" id="MobiDB-lite"/>
    </source>
</evidence>
<evidence type="ECO:0000269" key="6">
    <source>
    </source>
</evidence>
<evidence type="ECO:0000303" key="7">
    <source>
    </source>
</evidence>
<evidence type="ECO:0000305" key="8"/>
<evidence type="ECO:0007829" key="9">
    <source>
        <dbReference type="PDB" id="3S93"/>
    </source>
</evidence>
<feature type="chain" id="PRO_0000183166" description="Tudor domain-containing protein 5">
    <location>
        <begin position="1"/>
        <end position="981"/>
    </location>
</feature>
<feature type="domain" description="HTH OST-type 1" evidence="4">
    <location>
        <begin position="7"/>
        <end position="80"/>
    </location>
</feature>
<feature type="domain" description="HTH OST-type 2" evidence="4">
    <location>
        <begin position="127"/>
        <end position="202"/>
    </location>
</feature>
<feature type="domain" description="HTH OST-type 3" evidence="4">
    <location>
        <begin position="295"/>
        <end position="369"/>
    </location>
</feature>
<feature type="domain" description="Tudor" evidence="3">
    <location>
        <begin position="525"/>
        <end position="584"/>
    </location>
</feature>
<feature type="region of interest" description="Disordered" evidence="5">
    <location>
        <begin position="98"/>
        <end position="118"/>
    </location>
</feature>
<feature type="region of interest" description="Disordered" evidence="5">
    <location>
        <begin position="808"/>
        <end position="908"/>
    </location>
</feature>
<feature type="compositionally biased region" description="Basic residues" evidence="5">
    <location>
        <begin position="98"/>
        <end position="108"/>
    </location>
</feature>
<feature type="compositionally biased region" description="Polar residues" evidence="5">
    <location>
        <begin position="819"/>
        <end position="842"/>
    </location>
</feature>
<feature type="compositionally biased region" description="Polar residues" evidence="5">
    <location>
        <begin position="850"/>
        <end position="889"/>
    </location>
</feature>
<feature type="modified residue" description="Phosphoserine" evidence="2">
    <location>
        <position position="892"/>
    </location>
</feature>
<feature type="splice variant" id="VSP_023968" description="In isoform 1." evidence="7">
    <original>L</original>
    <variation>LQDINDEKSLSHLKSESKEPLKDSEFESLKTCNKSFEEDPKWSNPEPNDLKEENE</variation>
    <location>
        <position position="720"/>
    </location>
</feature>
<feature type="sequence variant" id="VAR_031209" description="In dbSNP:rs12066948.">
    <original>M</original>
    <variation>T</variation>
    <location>
        <position position="104"/>
    </location>
</feature>
<feature type="sequence variant" id="VAR_052422" description="In dbSNP:rs12069976.">
    <original>F</original>
    <variation>V</variation>
    <location>
        <position position="239"/>
    </location>
</feature>
<feature type="sequence variant" id="VAR_031210" description="In dbSNP:rs6704505.">
    <original>K</original>
    <variation>E</variation>
    <location>
        <position position="358"/>
    </location>
</feature>
<feature type="sequence variant" id="VAR_036706" description="In dbSNP:rs35448215." evidence="6">
    <original>E</original>
    <variation>K</variation>
    <location>
        <position position="722"/>
    </location>
</feature>
<feature type="sequence conflict" description="In Ref. 3; AAI30533/AAI44059." evidence="8" ref="3">
    <original>R</original>
    <variation>S</variation>
    <location>
        <position position="126"/>
    </location>
</feature>
<feature type="helix" evidence="9">
    <location>
        <begin position="1"/>
        <end position="20"/>
    </location>
</feature>
<feature type="strand" evidence="9">
    <location>
        <begin position="21"/>
        <end position="24"/>
    </location>
</feature>
<feature type="helix" evidence="9">
    <location>
        <begin position="28"/>
        <end position="39"/>
    </location>
</feature>
<feature type="helix" evidence="9">
    <location>
        <begin position="46"/>
        <end position="48"/>
    </location>
</feature>
<feature type="helix" evidence="9">
    <location>
        <begin position="53"/>
        <end position="58"/>
    </location>
</feature>
<feature type="turn" evidence="9">
    <location>
        <begin position="61"/>
        <end position="63"/>
    </location>
</feature>
<feature type="strand" evidence="9">
    <location>
        <begin position="64"/>
        <end position="67"/>
    </location>
</feature>
<feature type="helix" evidence="9">
    <location>
        <begin position="70"/>
        <end position="72"/>
    </location>
</feature>
<feature type="strand" evidence="9">
    <location>
        <begin position="75"/>
        <end position="78"/>
    </location>
</feature>
<dbReference type="EMBL" id="AK092142">
    <property type="protein sequence ID" value="BAC03815.1"/>
    <property type="status" value="ALT_FRAME"/>
    <property type="molecule type" value="mRNA"/>
</dbReference>
<dbReference type="EMBL" id="AK127370">
    <property type="protein sequence ID" value="BAC86946.1"/>
    <property type="molecule type" value="mRNA"/>
</dbReference>
<dbReference type="EMBL" id="AL160286">
    <property type="status" value="NOT_ANNOTATED_CDS"/>
    <property type="molecule type" value="Genomic_DNA"/>
</dbReference>
<dbReference type="EMBL" id="AL590987">
    <property type="status" value="NOT_ANNOTATED_CDS"/>
    <property type="molecule type" value="Genomic_DNA"/>
</dbReference>
<dbReference type="EMBL" id="BC043368">
    <property type="protein sequence ID" value="AAH43368.1"/>
    <property type="molecule type" value="mRNA"/>
</dbReference>
<dbReference type="EMBL" id="BC089387">
    <property type="protein sequence ID" value="AAH89387.1"/>
    <property type="molecule type" value="mRNA"/>
</dbReference>
<dbReference type="EMBL" id="BC130532">
    <property type="protein sequence ID" value="AAI30533.1"/>
    <property type="molecule type" value="mRNA"/>
</dbReference>
<dbReference type="EMBL" id="BC144058">
    <property type="protein sequence ID" value="AAI44059.1"/>
    <property type="molecule type" value="mRNA"/>
</dbReference>
<dbReference type="CCDS" id="CCDS1332.1">
    <molecule id="Q8NAT2-3"/>
</dbReference>
<dbReference type="CCDS" id="CCDS55663.1">
    <molecule id="Q8NAT2-1"/>
</dbReference>
<dbReference type="RefSeq" id="NP_001186014.1">
    <molecule id="Q8NAT2-1"/>
    <property type="nucleotide sequence ID" value="NM_001199085.3"/>
</dbReference>
<dbReference type="RefSeq" id="NP_001186018.1">
    <molecule id="Q8NAT2-1"/>
    <property type="nucleotide sequence ID" value="NM_001199089.3"/>
</dbReference>
<dbReference type="RefSeq" id="NP_001186020.1">
    <molecule id="Q8NAT2-3"/>
    <property type="nucleotide sequence ID" value="NM_001199091.2"/>
</dbReference>
<dbReference type="RefSeq" id="NP_001186021.1">
    <property type="nucleotide sequence ID" value="NM_001199092.1"/>
</dbReference>
<dbReference type="RefSeq" id="NP_001336852.1">
    <molecule id="Q8NAT2-3"/>
    <property type="nucleotide sequence ID" value="NM_001349923.1"/>
</dbReference>
<dbReference type="RefSeq" id="NP_775804.2">
    <molecule id="Q8NAT2-3"/>
    <property type="nucleotide sequence ID" value="NM_173533.3"/>
</dbReference>
<dbReference type="RefSeq" id="XP_005244991.1">
    <molecule id="Q8NAT2-1"/>
    <property type="nucleotide sequence ID" value="XM_005244934.2"/>
</dbReference>
<dbReference type="RefSeq" id="XP_005244992.1">
    <molecule id="Q8NAT2-1"/>
    <property type="nucleotide sequence ID" value="XM_005244935.5"/>
</dbReference>
<dbReference type="RefSeq" id="XP_016855962.1">
    <property type="nucleotide sequence ID" value="XM_017000473.1"/>
</dbReference>
<dbReference type="RefSeq" id="XP_047303706.1">
    <molecule id="Q8NAT2-1"/>
    <property type="nucleotide sequence ID" value="XM_047447750.1"/>
</dbReference>
<dbReference type="RefSeq" id="XP_047303708.1">
    <molecule id="Q8NAT2-3"/>
    <property type="nucleotide sequence ID" value="XM_047447752.1"/>
</dbReference>
<dbReference type="RefSeq" id="XP_047303709.1">
    <molecule id="Q8NAT2-3"/>
    <property type="nucleotide sequence ID" value="XM_047447753.1"/>
</dbReference>
<dbReference type="PDB" id="3S93">
    <property type="method" value="X-ray"/>
    <property type="resolution" value="2.28 A"/>
    <property type="chains" value="A/B=1-101"/>
</dbReference>
<dbReference type="PDBsum" id="3S93"/>
<dbReference type="SMR" id="Q8NAT2"/>
<dbReference type="BioGRID" id="127869">
    <property type="interactions" value="10"/>
</dbReference>
<dbReference type="FunCoup" id="Q8NAT2">
    <property type="interactions" value="20"/>
</dbReference>
<dbReference type="IntAct" id="Q8NAT2">
    <property type="interactions" value="6"/>
</dbReference>
<dbReference type="MINT" id="Q8NAT2"/>
<dbReference type="STRING" id="9606.ENSP00000406052"/>
<dbReference type="iPTMnet" id="Q8NAT2"/>
<dbReference type="PhosphoSitePlus" id="Q8NAT2"/>
<dbReference type="BioMuta" id="TDRD5"/>
<dbReference type="DMDM" id="134047943"/>
<dbReference type="jPOST" id="Q8NAT2"/>
<dbReference type="MassIVE" id="Q8NAT2"/>
<dbReference type="PaxDb" id="9606-ENSP00000406052"/>
<dbReference type="PeptideAtlas" id="Q8NAT2"/>
<dbReference type="ProteomicsDB" id="72696">
    <molecule id="Q8NAT2-3"/>
</dbReference>
<dbReference type="ProteomicsDB" id="72697">
    <molecule id="Q8NAT2-1"/>
</dbReference>
<dbReference type="Antibodypedia" id="2903">
    <property type="antibodies" value="18 antibodies from 11 providers"/>
</dbReference>
<dbReference type="Ensembl" id="ENST00000294848.12">
    <molecule id="Q8NAT2-3"/>
    <property type="protein sequence ID" value="ENSP00000294848.8"/>
    <property type="gene ID" value="ENSG00000162782.16"/>
</dbReference>
<dbReference type="Ensembl" id="ENST00000367614.5">
    <molecule id="Q8NAT2-3"/>
    <property type="protein sequence ID" value="ENSP00000356586.1"/>
    <property type="gene ID" value="ENSG00000162782.16"/>
</dbReference>
<dbReference type="Ensembl" id="ENST00000444136.6">
    <molecule id="Q8NAT2-1"/>
    <property type="protein sequence ID" value="ENSP00000406052.1"/>
    <property type="gene ID" value="ENSG00000162782.16"/>
</dbReference>
<dbReference type="GeneID" id="163589"/>
<dbReference type="KEGG" id="hsa:163589"/>
<dbReference type="MANE-Select" id="ENST00000444136.6">
    <molecule id="Q8NAT2-1"/>
    <property type="protein sequence ID" value="ENSP00000406052.1"/>
    <property type="RefSeq nucleotide sequence ID" value="NM_001199085.3"/>
    <property type="RefSeq protein sequence ID" value="NP_001186014.1"/>
</dbReference>
<dbReference type="UCSC" id="uc001gnf.4">
    <molecule id="Q8NAT2-3"/>
    <property type="organism name" value="human"/>
</dbReference>
<dbReference type="AGR" id="HGNC:20614"/>
<dbReference type="CTD" id="163589"/>
<dbReference type="DisGeNET" id="163589"/>
<dbReference type="GeneCards" id="TDRD5"/>
<dbReference type="HGNC" id="HGNC:20614">
    <property type="gene designation" value="TDRD5"/>
</dbReference>
<dbReference type="HPA" id="ENSG00000162782">
    <property type="expression patterns" value="Tissue enhanced (epididymis, testis)"/>
</dbReference>
<dbReference type="MIM" id="617748">
    <property type="type" value="gene"/>
</dbReference>
<dbReference type="neXtProt" id="NX_Q8NAT2"/>
<dbReference type="OpenTargets" id="ENSG00000162782"/>
<dbReference type="PharmGKB" id="PA134953461"/>
<dbReference type="VEuPathDB" id="HostDB:ENSG00000162782"/>
<dbReference type="eggNOG" id="KOG2039">
    <property type="taxonomic scope" value="Eukaryota"/>
</dbReference>
<dbReference type="GeneTree" id="ENSGT00940000159902"/>
<dbReference type="HOGENOM" id="CLU_013593_0_0_1"/>
<dbReference type="InParanoid" id="Q8NAT2"/>
<dbReference type="OMA" id="QFYIHIC"/>
<dbReference type="OrthoDB" id="10052065at2759"/>
<dbReference type="PAN-GO" id="Q8NAT2">
    <property type="GO annotations" value="4 GO annotations based on evolutionary models"/>
</dbReference>
<dbReference type="PhylomeDB" id="Q8NAT2"/>
<dbReference type="TreeFam" id="TF342664"/>
<dbReference type="PathwayCommons" id="Q8NAT2"/>
<dbReference type="SignaLink" id="Q8NAT2"/>
<dbReference type="BioGRID-ORCS" id="163589">
    <property type="hits" value="7 hits in 1148 CRISPR screens"/>
</dbReference>
<dbReference type="ChiTaRS" id="TDRD5">
    <property type="organism name" value="human"/>
</dbReference>
<dbReference type="GenomeRNAi" id="163589"/>
<dbReference type="Pharos" id="Q8NAT2">
    <property type="development level" value="Tdark"/>
</dbReference>
<dbReference type="PRO" id="PR:Q8NAT2"/>
<dbReference type="Proteomes" id="UP000005640">
    <property type="component" value="Chromosome 1"/>
</dbReference>
<dbReference type="RNAct" id="Q8NAT2">
    <property type="molecule type" value="protein"/>
</dbReference>
<dbReference type="Bgee" id="ENSG00000162782">
    <property type="expression patterns" value="Expressed in right testis and 86 other cell types or tissues"/>
</dbReference>
<dbReference type="ExpressionAtlas" id="Q8NAT2">
    <property type="expression patterns" value="baseline and differential"/>
</dbReference>
<dbReference type="GO" id="GO:0033391">
    <property type="term" value="C:chromatoid body"/>
    <property type="evidence" value="ECO:0000250"/>
    <property type="project" value="UniProtKB"/>
</dbReference>
<dbReference type="GO" id="GO:0071546">
    <property type="term" value="C:pi-body"/>
    <property type="evidence" value="ECO:0000250"/>
    <property type="project" value="UniProtKB"/>
</dbReference>
<dbReference type="GO" id="GO:0045202">
    <property type="term" value="C:synapse"/>
    <property type="evidence" value="ECO:0007669"/>
    <property type="project" value="Ensembl"/>
</dbReference>
<dbReference type="GO" id="GO:0030719">
    <property type="term" value="P:P granule organization"/>
    <property type="evidence" value="ECO:0000250"/>
    <property type="project" value="UniProtKB"/>
</dbReference>
<dbReference type="GO" id="GO:0007286">
    <property type="term" value="P:spermatid development"/>
    <property type="evidence" value="ECO:0000250"/>
    <property type="project" value="UniProtKB"/>
</dbReference>
<dbReference type="GO" id="GO:0141196">
    <property type="term" value="P:transposable element silencing by piRNA-mediated DNA methylation"/>
    <property type="evidence" value="ECO:0000250"/>
    <property type="project" value="UniProtKB"/>
</dbReference>
<dbReference type="CDD" id="cd09985">
    <property type="entry name" value="LOTUS_1_TDRD5"/>
    <property type="match status" value="1"/>
</dbReference>
<dbReference type="CDD" id="cd09975">
    <property type="entry name" value="LOTUS_2_TDRD5"/>
    <property type="match status" value="1"/>
</dbReference>
<dbReference type="CDD" id="cd09976">
    <property type="entry name" value="LOTUS_3_TDRD5"/>
    <property type="match status" value="1"/>
</dbReference>
<dbReference type="CDD" id="cd20419">
    <property type="entry name" value="Tudor_TDRD5"/>
    <property type="match status" value="1"/>
</dbReference>
<dbReference type="FunFam" id="2.30.30.140:FF:000051">
    <property type="entry name" value="Tudor domain-containing protein 5"/>
    <property type="match status" value="1"/>
</dbReference>
<dbReference type="FunFam" id="3.30.420.610:FF:000005">
    <property type="entry name" value="Tudor domain-containing protein 5"/>
    <property type="match status" value="1"/>
</dbReference>
<dbReference type="FunFam" id="3.30.420.610:FF:000007">
    <property type="entry name" value="Tudor domain-containing protein 5"/>
    <property type="match status" value="1"/>
</dbReference>
<dbReference type="FunFam" id="3.30.420.610:FF:000011">
    <property type="entry name" value="tudor domain-containing protein 5 isoform X3"/>
    <property type="match status" value="1"/>
</dbReference>
<dbReference type="Gene3D" id="2.30.30.140">
    <property type="match status" value="1"/>
</dbReference>
<dbReference type="Gene3D" id="2.40.50.90">
    <property type="match status" value="1"/>
</dbReference>
<dbReference type="Gene3D" id="3.30.420.610">
    <property type="entry name" value="LOTUS domain-like"/>
    <property type="match status" value="3"/>
</dbReference>
<dbReference type="InterPro" id="IPR041966">
    <property type="entry name" value="LOTUS-like"/>
</dbReference>
<dbReference type="InterPro" id="IPR025605">
    <property type="entry name" value="OST-HTH/LOTUS_dom"/>
</dbReference>
<dbReference type="InterPro" id="IPR035437">
    <property type="entry name" value="SNase_OB-fold_sf"/>
</dbReference>
<dbReference type="InterPro" id="IPR037982">
    <property type="entry name" value="TDRD5_LOTUS_2"/>
</dbReference>
<dbReference type="InterPro" id="IPR002999">
    <property type="entry name" value="Tudor"/>
</dbReference>
<dbReference type="InterPro" id="IPR050621">
    <property type="entry name" value="Tudor_domain_containing"/>
</dbReference>
<dbReference type="PANTHER" id="PTHR22948">
    <property type="entry name" value="TUDOR DOMAIN CONTAINING PROTEIN"/>
    <property type="match status" value="1"/>
</dbReference>
<dbReference type="PANTHER" id="PTHR22948:SF19">
    <property type="entry name" value="TUDOR DOMAIN-CONTAINING PROTEIN 5"/>
    <property type="match status" value="1"/>
</dbReference>
<dbReference type="Pfam" id="PF12872">
    <property type="entry name" value="OST-HTH"/>
    <property type="match status" value="3"/>
</dbReference>
<dbReference type="Pfam" id="PF00567">
    <property type="entry name" value="TUDOR"/>
    <property type="match status" value="1"/>
</dbReference>
<dbReference type="SMART" id="SM00333">
    <property type="entry name" value="TUDOR"/>
    <property type="match status" value="1"/>
</dbReference>
<dbReference type="SUPFAM" id="SSF63748">
    <property type="entry name" value="Tudor/PWWP/MBT"/>
    <property type="match status" value="1"/>
</dbReference>
<dbReference type="PROSITE" id="PS51644">
    <property type="entry name" value="HTH_OST"/>
    <property type="match status" value="3"/>
</dbReference>
<dbReference type="PROSITE" id="PS50304">
    <property type="entry name" value="TUDOR"/>
    <property type="match status" value="1"/>
</dbReference>
<name>TDRD5_HUMAN</name>
<proteinExistence type="evidence at protein level"/>
<accession>Q8NAT2</accession>
<accession>A1L4G5</accession>
<accession>B7ZLV0</accession>
<accession>Q5EBN4</accession>
<accession>Q5VTV0</accession>
<accession>Q6ZSK2</accession>
<reference key="1">
    <citation type="journal article" date="2004" name="Nat. Genet.">
        <title>Complete sequencing and characterization of 21,243 full-length human cDNAs.</title>
        <authorList>
            <person name="Ota T."/>
            <person name="Suzuki Y."/>
            <person name="Nishikawa T."/>
            <person name="Otsuki T."/>
            <person name="Sugiyama T."/>
            <person name="Irie R."/>
            <person name="Wakamatsu A."/>
            <person name="Hayashi K."/>
            <person name="Sato H."/>
            <person name="Nagai K."/>
            <person name="Kimura K."/>
            <person name="Makita H."/>
            <person name="Sekine M."/>
            <person name="Obayashi M."/>
            <person name="Nishi T."/>
            <person name="Shibahara T."/>
            <person name="Tanaka T."/>
            <person name="Ishii S."/>
            <person name="Yamamoto J."/>
            <person name="Saito K."/>
            <person name="Kawai Y."/>
            <person name="Isono Y."/>
            <person name="Nakamura Y."/>
            <person name="Nagahari K."/>
            <person name="Murakami K."/>
            <person name="Yasuda T."/>
            <person name="Iwayanagi T."/>
            <person name="Wagatsuma M."/>
            <person name="Shiratori A."/>
            <person name="Sudo H."/>
            <person name="Hosoiri T."/>
            <person name="Kaku Y."/>
            <person name="Kodaira H."/>
            <person name="Kondo H."/>
            <person name="Sugawara M."/>
            <person name="Takahashi M."/>
            <person name="Kanda K."/>
            <person name="Yokoi T."/>
            <person name="Furuya T."/>
            <person name="Kikkawa E."/>
            <person name="Omura Y."/>
            <person name="Abe K."/>
            <person name="Kamihara K."/>
            <person name="Katsuta N."/>
            <person name="Sato K."/>
            <person name="Tanikawa M."/>
            <person name="Yamazaki M."/>
            <person name="Ninomiya K."/>
            <person name="Ishibashi T."/>
            <person name="Yamashita H."/>
            <person name="Murakawa K."/>
            <person name="Fujimori K."/>
            <person name="Tanai H."/>
            <person name="Kimata M."/>
            <person name="Watanabe M."/>
            <person name="Hiraoka S."/>
            <person name="Chiba Y."/>
            <person name="Ishida S."/>
            <person name="Ono Y."/>
            <person name="Takiguchi S."/>
            <person name="Watanabe S."/>
            <person name="Yosida M."/>
            <person name="Hotuta T."/>
            <person name="Kusano J."/>
            <person name="Kanehori K."/>
            <person name="Takahashi-Fujii A."/>
            <person name="Hara H."/>
            <person name="Tanase T.-O."/>
            <person name="Nomura Y."/>
            <person name="Togiya S."/>
            <person name="Komai F."/>
            <person name="Hara R."/>
            <person name="Takeuchi K."/>
            <person name="Arita M."/>
            <person name="Imose N."/>
            <person name="Musashino K."/>
            <person name="Yuuki H."/>
            <person name="Oshima A."/>
            <person name="Sasaki N."/>
            <person name="Aotsuka S."/>
            <person name="Yoshikawa Y."/>
            <person name="Matsunawa H."/>
            <person name="Ichihara T."/>
            <person name="Shiohata N."/>
            <person name="Sano S."/>
            <person name="Moriya S."/>
            <person name="Momiyama H."/>
            <person name="Satoh N."/>
            <person name="Takami S."/>
            <person name="Terashima Y."/>
            <person name="Suzuki O."/>
            <person name="Nakagawa S."/>
            <person name="Senoh A."/>
            <person name="Mizoguchi H."/>
            <person name="Goto Y."/>
            <person name="Shimizu F."/>
            <person name="Wakebe H."/>
            <person name="Hishigaki H."/>
            <person name="Watanabe T."/>
            <person name="Sugiyama A."/>
            <person name="Takemoto M."/>
            <person name="Kawakami B."/>
            <person name="Yamazaki M."/>
            <person name="Watanabe K."/>
            <person name="Kumagai A."/>
            <person name="Itakura S."/>
            <person name="Fukuzumi Y."/>
            <person name="Fujimori Y."/>
            <person name="Komiyama M."/>
            <person name="Tashiro H."/>
            <person name="Tanigami A."/>
            <person name="Fujiwara T."/>
            <person name="Ono T."/>
            <person name="Yamada K."/>
            <person name="Fujii Y."/>
            <person name="Ozaki K."/>
            <person name="Hirao M."/>
            <person name="Ohmori Y."/>
            <person name="Kawabata A."/>
            <person name="Hikiji T."/>
            <person name="Kobatake N."/>
            <person name="Inagaki H."/>
            <person name="Ikema Y."/>
            <person name="Okamoto S."/>
            <person name="Okitani R."/>
            <person name="Kawakami T."/>
            <person name="Noguchi S."/>
            <person name="Itoh T."/>
            <person name="Shigeta K."/>
            <person name="Senba T."/>
            <person name="Matsumura K."/>
            <person name="Nakajima Y."/>
            <person name="Mizuno T."/>
            <person name="Morinaga M."/>
            <person name="Sasaki M."/>
            <person name="Togashi T."/>
            <person name="Oyama M."/>
            <person name="Hata H."/>
            <person name="Watanabe M."/>
            <person name="Komatsu T."/>
            <person name="Mizushima-Sugano J."/>
            <person name="Satoh T."/>
            <person name="Shirai Y."/>
            <person name="Takahashi Y."/>
            <person name="Nakagawa K."/>
            <person name="Okumura K."/>
            <person name="Nagase T."/>
            <person name="Nomura N."/>
            <person name="Kikuchi H."/>
            <person name="Masuho Y."/>
            <person name="Yamashita R."/>
            <person name="Nakai K."/>
            <person name="Yada T."/>
            <person name="Nakamura Y."/>
            <person name="Ohara O."/>
            <person name="Isogai T."/>
            <person name="Sugano S."/>
        </authorList>
    </citation>
    <scope>NUCLEOTIDE SEQUENCE [LARGE SCALE MRNA] (ISOFORM 3)</scope>
    <source>
        <tissue>Substantia nigra</tissue>
    </source>
</reference>
<reference key="2">
    <citation type="journal article" date="2006" name="Nature">
        <title>The DNA sequence and biological annotation of human chromosome 1.</title>
        <authorList>
            <person name="Gregory S.G."/>
            <person name="Barlow K.F."/>
            <person name="McLay K.E."/>
            <person name="Kaul R."/>
            <person name="Swarbreck D."/>
            <person name="Dunham A."/>
            <person name="Scott C.E."/>
            <person name="Howe K.L."/>
            <person name="Woodfine K."/>
            <person name="Spencer C.C.A."/>
            <person name="Jones M.C."/>
            <person name="Gillson C."/>
            <person name="Searle S."/>
            <person name="Zhou Y."/>
            <person name="Kokocinski F."/>
            <person name="McDonald L."/>
            <person name="Evans R."/>
            <person name="Phillips K."/>
            <person name="Atkinson A."/>
            <person name="Cooper R."/>
            <person name="Jones C."/>
            <person name="Hall R.E."/>
            <person name="Andrews T.D."/>
            <person name="Lloyd C."/>
            <person name="Ainscough R."/>
            <person name="Almeida J.P."/>
            <person name="Ambrose K.D."/>
            <person name="Anderson F."/>
            <person name="Andrew R.W."/>
            <person name="Ashwell R.I.S."/>
            <person name="Aubin K."/>
            <person name="Babbage A.K."/>
            <person name="Bagguley C.L."/>
            <person name="Bailey J."/>
            <person name="Beasley H."/>
            <person name="Bethel G."/>
            <person name="Bird C.P."/>
            <person name="Bray-Allen S."/>
            <person name="Brown J.Y."/>
            <person name="Brown A.J."/>
            <person name="Buckley D."/>
            <person name="Burton J."/>
            <person name="Bye J."/>
            <person name="Carder C."/>
            <person name="Chapman J.C."/>
            <person name="Clark S.Y."/>
            <person name="Clarke G."/>
            <person name="Clee C."/>
            <person name="Cobley V."/>
            <person name="Collier R.E."/>
            <person name="Corby N."/>
            <person name="Coville G.J."/>
            <person name="Davies J."/>
            <person name="Deadman R."/>
            <person name="Dunn M."/>
            <person name="Earthrowl M."/>
            <person name="Ellington A.G."/>
            <person name="Errington H."/>
            <person name="Frankish A."/>
            <person name="Frankland J."/>
            <person name="French L."/>
            <person name="Garner P."/>
            <person name="Garnett J."/>
            <person name="Gay L."/>
            <person name="Ghori M.R.J."/>
            <person name="Gibson R."/>
            <person name="Gilby L.M."/>
            <person name="Gillett W."/>
            <person name="Glithero R.J."/>
            <person name="Grafham D.V."/>
            <person name="Griffiths C."/>
            <person name="Griffiths-Jones S."/>
            <person name="Grocock R."/>
            <person name="Hammond S."/>
            <person name="Harrison E.S.I."/>
            <person name="Hart E."/>
            <person name="Haugen E."/>
            <person name="Heath P.D."/>
            <person name="Holmes S."/>
            <person name="Holt K."/>
            <person name="Howden P.J."/>
            <person name="Hunt A.R."/>
            <person name="Hunt S.E."/>
            <person name="Hunter G."/>
            <person name="Isherwood J."/>
            <person name="James R."/>
            <person name="Johnson C."/>
            <person name="Johnson D."/>
            <person name="Joy A."/>
            <person name="Kay M."/>
            <person name="Kershaw J.K."/>
            <person name="Kibukawa M."/>
            <person name="Kimberley A.M."/>
            <person name="King A."/>
            <person name="Knights A.J."/>
            <person name="Lad H."/>
            <person name="Laird G."/>
            <person name="Lawlor S."/>
            <person name="Leongamornlert D.A."/>
            <person name="Lloyd D.M."/>
            <person name="Loveland J."/>
            <person name="Lovell J."/>
            <person name="Lush M.J."/>
            <person name="Lyne R."/>
            <person name="Martin S."/>
            <person name="Mashreghi-Mohammadi M."/>
            <person name="Matthews L."/>
            <person name="Matthews N.S.W."/>
            <person name="McLaren S."/>
            <person name="Milne S."/>
            <person name="Mistry S."/>
            <person name="Moore M.J.F."/>
            <person name="Nickerson T."/>
            <person name="O'Dell C.N."/>
            <person name="Oliver K."/>
            <person name="Palmeiri A."/>
            <person name="Palmer S.A."/>
            <person name="Parker A."/>
            <person name="Patel D."/>
            <person name="Pearce A.V."/>
            <person name="Peck A.I."/>
            <person name="Pelan S."/>
            <person name="Phelps K."/>
            <person name="Phillimore B.J."/>
            <person name="Plumb R."/>
            <person name="Rajan J."/>
            <person name="Raymond C."/>
            <person name="Rouse G."/>
            <person name="Saenphimmachak C."/>
            <person name="Sehra H.K."/>
            <person name="Sheridan E."/>
            <person name="Shownkeen R."/>
            <person name="Sims S."/>
            <person name="Skuce C.D."/>
            <person name="Smith M."/>
            <person name="Steward C."/>
            <person name="Subramanian S."/>
            <person name="Sycamore N."/>
            <person name="Tracey A."/>
            <person name="Tromans A."/>
            <person name="Van Helmond Z."/>
            <person name="Wall M."/>
            <person name="Wallis J.M."/>
            <person name="White S."/>
            <person name="Whitehead S.L."/>
            <person name="Wilkinson J.E."/>
            <person name="Willey D.L."/>
            <person name="Williams H."/>
            <person name="Wilming L."/>
            <person name="Wray P.W."/>
            <person name="Wu Z."/>
            <person name="Coulson A."/>
            <person name="Vaudin M."/>
            <person name="Sulston J.E."/>
            <person name="Durbin R.M."/>
            <person name="Hubbard T."/>
            <person name="Wooster R."/>
            <person name="Dunham I."/>
            <person name="Carter N.P."/>
            <person name="McVean G."/>
            <person name="Ross M.T."/>
            <person name="Harrow J."/>
            <person name="Olson M.V."/>
            <person name="Beck S."/>
            <person name="Rogers J."/>
            <person name="Bentley D.R."/>
        </authorList>
    </citation>
    <scope>NUCLEOTIDE SEQUENCE [LARGE SCALE GENOMIC DNA]</scope>
</reference>
<reference key="3">
    <citation type="journal article" date="2004" name="Genome Res.">
        <title>The status, quality, and expansion of the NIH full-length cDNA project: the Mammalian Gene Collection (MGC).</title>
        <authorList>
            <consortium name="The MGC Project Team"/>
        </authorList>
    </citation>
    <scope>NUCLEOTIDE SEQUENCE [LARGE SCALE MRNA] (ISOFORM 1)</scope>
    <scope>NUCLEOTIDE SEQUENCE [LARGE SCALE MRNA] OF 195-981 (ISOFORM 3)</scope>
    <scope>VARIANT LYS-722</scope>
    <source>
        <tissue>Brain</tissue>
        <tissue>Testis</tissue>
    </source>
</reference>
<reference key="4">
    <citation type="journal article" date="2010" name="Biol. Direct">
        <title>OST-HTH: a novel predicted RNA-binding domain.</title>
        <authorList>
            <person name="Anantharaman V."/>
            <person name="Zhang D."/>
            <person name="Aravind L."/>
        </authorList>
    </citation>
    <scope>IDENTIFICATION OF THE HTH OST-TYPE DOMAIN</scope>
</reference>
<reference key="5">
    <citation type="journal article" date="2010" name="Bioinformatics">
        <title>LOTUS, a new domain associated with small RNA pathways in the germline.</title>
        <authorList>
            <person name="Callebaut I."/>
            <person name="Mornon J.P."/>
        </authorList>
    </citation>
    <scope>IDENTIFICATION OF THE HTH OST-TYPE DOMAIN</scope>
</reference>
<reference key="6">
    <citation type="submission" date="2011-08" db="PDB data bank">
        <title>Crystal structure of conserved motif in TDRD5.</title>
        <authorList>
            <consortium name="Structural genomics consortium (SGC)"/>
        </authorList>
    </citation>
    <scope>X-RAY CRYSTALLOGRAPHY (2.28 ANGSTROMS) OF 1-101</scope>
</reference>
<keyword id="KW-0002">3D-structure</keyword>
<keyword id="KW-0025">Alternative splicing</keyword>
<keyword id="KW-0963">Cytoplasm</keyword>
<keyword id="KW-0217">Developmental protein</keyword>
<keyword id="KW-0221">Differentiation</keyword>
<keyword id="KW-0597">Phosphoprotein</keyword>
<keyword id="KW-1267">Proteomics identification</keyword>
<keyword id="KW-1185">Reference proteome</keyword>
<keyword id="KW-0677">Repeat</keyword>
<keyword id="KW-0744">Spermatogenesis</keyword>
<protein>
    <recommendedName>
        <fullName>Tudor domain-containing protein 5</fullName>
    </recommendedName>
</protein>
<organism>
    <name type="scientific">Homo sapiens</name>
    <name type="common">Human</name>
    <dbReference type="NCBI Taxonomy" id="9606"/>
    <lineage>
        <taxon>Eukaryota</taxon>
        <taxon>Metazoa</taxon>
        <taxon>Chordata</taxon>
        <taxon>Craniata</taxon>
        <taxon>Vertebrata</taxon>
        <taxon>Euteleostomi</taxon>
        <taxon>Mammalia</taxon>
        <taxon>Eutheria</taxon>
        <taxon>Euarchontoglires</taxon>
        <taxon>Primates</taxon>
        <taxon>Haplorrhini</taxon>
        <taxon>Catarrhini</taxon>
        <taxon>Hominidae</taxon>
        <taxon>Homo</taxon>
    </lineage>
</organism>
<gene>
    <name type="primary">TDRD5</name>
    <name type="synonym">TUDOR3</name>
</gene>